<organism>
    <name type="scientific">Opisthacanthus cayaporum</name>
    <name type="common">South American scorpion</name>
    <dbReference type="NCBI Taxonomy" id="573324"/>
    <lineage>
        <taxon>Eukaryota</taxon>
        <taxon>Metazoa</taxon>
        <taxon>Ecdysozoa</taxon>
        <taxon>Arthropoda</taxon>
        <taxon>Chelicerata</taxon>
        <taxon>Arachnida</taxon>
        <taxon>Scorpiones</taxon>
        <taxon>Iurida</taxon>
        <taxon>Scorpionoidea</taxon>
        <taxon>Hemiscorpiidae</taxon>
        <taxon>Opisthacanthus</taxon>
    </lineage>
</organism>
<comment type="function">
    <text>Amphipathic peptide with probable antimicrobial activity. May act by disrupting the integrity of the bacterial cell membrane.</text>
</comment>
<comment type="subcellular location">
    <subcellularLocation>
        <location evidence="2">Secreted</location>
    </subcellularLocation>
    <subcellularLocation>
        <location evidence="4">Target cell membrane</location>
    </subcellularLocation>
</comment>
<comment type="tissue specificity">
    <text evidence="4">Expressed by the venom gland.</text>
</comment>
<comment type="mass spectrometry"/>
<comment type="similarity">
    <text evidence="4">Belongs to the non-disulfide-bridged peptide (NDBP) superfamily. Medium-length antimicrobial peptide (group 3) family.</text>
</comment>
<comment type="sequence caution" evidence="4">
    <conflict type="erroneous initiation">
        <sequence resource="EMBL-CDS" id="CAX51392"/>
    </conflict>
    <text>Extended N-terminus.</text>
</comment>
<reference key="1">
    <citation type="journal article" date="2009" name="Toxicon">
        <title>Cloning and characterization of cDNA sequences encoding for new venom peptides of the Brazilian scorpion Opisthacanthus cayaporum.</title>
        <authorList>
            <person name="Silva E.C."/>
            <person name="Camargos T.S."/>
            <person name="Maranhao A.Q."/>
            <person name="Silva-Pereira I."/>
            <person name="Silva L.P."/>
            <person name="Possani L.D."/>
            <person name="Schwartz E.F."/>
        </authorList>
    </citation>
    <scope>NUCLEOTIDE SEQUENCE [MRNA]</scope>
    <source>
        <tissue>Venom gland</tissue>
    </source>
</reference>
<reference key="2">
    <citation type="journal article" date="2008" name="Toxicon">
        <title>Mass spectrometry analysis, amino acid sequence and biological activity of venom components from the Brazilian scorpion Opisthacanthus cayaporum.</title>
        <authorList>
            <person name="Schwartz E.F."/>
            <person name="Camargos T.S."/>
            <person name="Zamudio F.Z."/>
            <person name="Silva L.P."/>
            <person name="Bloch C. Jr."/>
            <person name="Caixeta F."/>
            <person name="Schwartz C.A."/>
            <person name="Possani L.D."/>
        </authorList>
    </citation>
    <scope>MASS SPECTROMETRY</scope>
    <scope>SUBCELLULAR LOCATION</scope>
    <source>
        <tissue>Venom</tissue>
    </source>
</reference>
<protein>
    <recommendedName>
        <fullName evidence="3">OcyC3</fullName>
    </recommendedName>
    <alternativeName>
        <fullName evidence="3">Non-disulfide-bridged peptide 4.3</fullName>
        <shortName evidence="3">NDBP-4.3</shortName>
    </alternativeName>
</protein>
<dbReference type="EMBL" id="FM998745">
    <property type="protein sequence ID" value="CAX51392.1"/>
    <property type="status" value="ALT_INIT"/>
    <property type="molecule type" value="mRNA"/>
</dbReference>
<dbReference type="SMR" id="C5J888"/>
<dbReference type="TCDB" id="1.C.124.1.4">
    <property type="family name" value="the antimicrobial pore-forming pandinin (pin) family"/>
</dbReference>
<dbReference type="GO" id="GO:0005576">
    <property type="term" value="C:extracellular region"/>
    <property type="evidence" value="ECO:0007669"/>
    <property type="project" value="UniProtKB-SubCell"/>
</dbReference>
<dbReference type="GO" id="GO:0016020">
    <property type="term" value="C:membrane"/>
    <property type="evidence" value="ECO:0007669"/>
    <property type="project" value="UniProtKB-KW"/>
</dbReference>
<dbReference type="GO" id="GO:0044218">
    <property type="term" value="C:other organism cell membrane"/>
    <property type="evidence" value="ECO:0007669"/>
    <property type="project" value="UniProtKB-KW"/>
</dbReference>
<keyword id="KW-0929">Antimicrobial</keyword>
<keyword id="KW-0165">Cleavage on pair of basic residues</keyword>
<keyword id="KW-0472">Membrane</keyword>
<keyword id="KW-0964">Secreted</keyword>
<keyword id="KW-0732">Signal</keyword>
<keyword id="KW-1052">Target cell membrane</keyword>
<keyword id="KW-1053">Target membrane</keyword>
<accession>C5J888</accession>
<sequence>MQYKTFLVISLAYLLVADEAAAFWATLAKGALKLIPTIANAFSSKSKKRREINNVFEPYHENLDLELERFLSQLQ</sequence>
<feature type="signal peptide">
    <location>
        <begin position="1"/>
        <end position="22"/>
    </location>
</feature>
<feature type="peptide" id="PRO_5000515181" description="OcyC3">
    <location>
        <begin position="23"/>
        <end position="46"/>
    </location>
</feature>
<feature type="propeptide" id="PRO_5000515182">
    <location>
        <begin position="51"/>
        <end position="75"/>
    </location>
</feature>
<evidence type="ECO:0000269" key="1">
    <source>
    </source>
</evidence>
<evidence type="ECO:0000269" key="2">
    <source>
    </source>
</evidence>
<evidence type="ECO:0000303" key="3">
    <source>
    </source>
</evidence>
<evidence type="ECO:0000305" key="4"/>
<proteinExistence type="evidence at protein level"/>
<name>NDB3T_OPICY</name>